<evidence type="ECO:0000255" key="1">
    <source>
        <dbReference type="HAMAP-Rule" id="MF_00658"/>
    </source>
</evidence>
<name>RLMH_RHOP2</name>
<feature type="chain" id="PRO_0000260599" description="Ribosomal RNA large subunit methyltransferase H">
    <location>
        <begin position="1"/>
        <end position="160"/>
    </location>
</feature>
<feature type="binding site" evidence="1">
    <location>
        <position position="76"/>
    </location>
    <ligand>
        <name>S-adenosyl-L-methionine</name>
        <dbReference type="ChEBI" id="CHEBI:59789"/>
    </ligand>
</feature>
<feature type="binding site" evidence="1">
    <location>
        <position position="108"/>
    </location>
    <ligand>
        <name>S-adenosyl-L-methionine</name>
        <dbReference type="ChEBI" id="CHEBI:59789"/>
    </ligand>
</feature>
<protein>
    <recommendedName>
        <fullName evidence="1">Ribosomal RNA large subunit methyltransferase H</fullName>
        <ecNumber evidence="1">2.1.1.177</ecNumber>
    </recommendedName>
    <alternativeName>
        <fullName evidence="1">23S rRNA (pseudouridine1915-N3)-methyltransferase</fullName>
    </alternativeName>
    <alternativeName>
        <fullName evidence="1">23S rRNA m3Psi1915 methyltransferase</fullName>
    </alternativeName>
    <alternativeName>
        <fullName evidence="1">rRNA (pseudouridine-N3-)-methyltransferase RlmH</fullName>
    </alternativeName>
</protein>
<keyword id="KW-0963">Cytoplasm</keyword>
<keyword id="KW-0489">Methyltransferase</keyword>
<keyword id="KW-1185">Reference proteome</keyword>
<keyword id="KW-0698">rRNA processing</keyword>
<keyword id="KW-0949">S-adenosyl-L-methionine</keyword>
<keyword id="KW-0808">Transferase</keyword>
<gene>
    <name evidence="1" type="primary">rlmH</name>
    <name type="ordered locus">RPB_0256</name>
</gene>
<dbReference type="EC" id="2.1.1.177" evidence="1"/>
<dbReference type="EMBL" id="CP000250">
    <property type="protein sequence ID" value="ABD04967.1"/>
    <property type="molecule type" value="Genomic_DNA"/>
</dbReference>
<dbReference type="RefSeq" id="WP_011439157.1">
    <property type="nucleotide sequence ID" value="NC_007778.1"/>
</dbReference>
<dbReference type="SMR" id="Q2J3J3"/>
<dbReference type="STRING" id="316058.RPB_0256"/>
<dbReference type="KEGG" id="rpb:RPB_0256"/>
<dbReference type="eggNOG" id="COG1576">
    <property type="taxonomic scope" value="Bacteria"/>
</dbReference>
<dbReference type="HOGENOM" id="CLU_100552_1_1_5"/>
<dbReference type="OrthoDB" id="9806643at2"/>
<dbReference type="Proteomes" id="UP000008809">
    <property type="component" value="Chromosome"/>
</dbReference>
<dbReference type="GO" id="GO:0005737">
    <property type="term" value="C:cytoplasm"/>
    <property type="evidence" value="ECO:0007669"/>
    <property type="project" value="UniProtKB-SubCell"/>
</dbReference>
<dbReference type="GO" id="GO:0070038">
    <property type="term" value="F:rRNA (pseudouridine-N3-)-methyltransferase activity"/>
    <property type="evidence" value="ECO:0007669"/>
    <property type="project" value="UniProtKB-UniRule"/>
</dbReference>
<dbReference type="CDD" id="cd18081">
    <property type="entry name" value="RlmH-like"/>
    <property type="match status" value="1"/>
</dbReference>
<dbReference type="Gene3D" id="3.40.1280.10">
    <property type="match status" value="1"/>
</dbReference>
<dbReference type="HAMAP" id="MF_00658">
    <property type="entry name" value="23SrRNA_methyltr_H"/>
    <property type="match status" value="1"/>
</dbReference>
<dbReference type="InterPro" id="IPR029028">
    <property type="entry name" value="Alpha/beta_knot_MTases"/>
</dbReference>
<dbReference type="InterPro" id="IPR003742">
    <property type="entry name" value="RlmH-like"/>
</dbReference>
<dbReference type="InterPro" id="IPR029026">
    <property type="entry name" value="tRNA_m1G_MTases_N"/>
</dbReference>
<dbReference type="NCBIfam" id="NF000989">
    <property type="entry name" value="PRK00103.2-3"/>
    <property type="match status" value="1"/>
</dbReference>
<dbReference type="NCBIfam" id="NF000991">
    <property type="entry name" value="PRK00103.2-5"/>
    <property type="match status" value="1"/>
</dbReference>
<dbReference type="PANTHER" id="PTHR33603">
    <property type="entry name" value="METHYLTRANSFERASE"/>
    <property type="match status" value="1"/>
</dbReference>
<dbReference type="PANTHER" id="PTHR33603:SF1">
    <property type="entry name" value="RIBOSOMAL RNA LARGE SUBUNIT METHYLTRANSFERASE H"/>
    <property type="match status" value="1"/>
</dbReference>
<dbReference type="Pfam" id="PF02590">
    <property type="entry name" value="SPOUT_MTase"/>
    <property type="match status" value="1"/>
</dbReference>
<dbReference type="PIRSF" id="PIRSF004505">
    <property type="entry name" value="MT_bac"/>
    <property type="match status" value="1"/>
</dbReference>
<dbReference type="SUPFAM" id="SSF75217">
    <property type="entry name" value="alpha/beta knot"/>
    <property type="match status" value="1"/>
</dbReference>
<proteinExistence type="inferred from homology"/>
<accession>Q2J3J3</accession>
<comment type="function">
    <text evidence="1">Specifically methylates the pseudouridine at position 1915 (m3Psi1915) in 23S rRNA.</text>
</comment>
<comment type="catalytic activity">
    <reaction evidence="1">
        <text>pseudouridine(1915) in 23S rRNA + S-adenosyl-L-methionine = N(3)-methylpseudouridine(1915) in 23S rRNA + S-adenosyl-L-homocysteine + H(+)</text>
        <dbReference type="Rhea" id="RHEA:42752"/>
        <dbReference type="Rhea" id="RHEA-COMP:10221"/>
        <dbReference type="Rhea" id="RHEA-COMP:10222"/>
        <dbReference type="ChEBI" id="CHEBI:15378"/>
        <dbReference type="ChEBI" id="CHEBI:57856"/>
        <dbReference type="ChEBI" id="CHEBI:59789"/>
        <dbReference type="ChEBI" id="CHEBI:65314"/>
        <dbReference type="ChEBI" id="CHEBI:74486"/>
        <dbReference type="EC" id="2.1.1.177"/>
    </reaction>
</comment>
<comment type="subunit">
    <text evidence="1">Homodimer.</text>
</comment>
<comment type="subcellular location">
    <subcellularLocation>
        <location evidence="1">Cytoplasm</location>
    </subcellularLocation>
</comment>
<comment type="similarity">
    <text evidence="1">Belongs to the RNA methyltransferase RlmH family.</text>
</comment>
<organism>
    <name type="scientific">Rhodopseudomonas palustris (strain HaA2)</name>
    <dbReference type="NCBI Taxonomy" id="316058"/>
    <lineage>
        <taxon>Bacteria</taxon>
        <taxon>Pseudomonadati</taxon>
        <taxon>Pseudomonadota</taxon>
        <taxon>Alphaproteobacteria</taxon>
        <taxon>Hyphomicrobiales</taxon>
        <taxon>Nitrobacteraceae</taxon>
        <taxon>Rhodopseudomonas</taxon>
    </lineage>
</organism>
<sequence length="160" mass="17520">MRLTVIAVGKLKQGPERELAERYRARFDDIGRKLGFRGLDIHEISESRARDAATRMAEEAAAIAALVPDGGALVTLDERGKSVDSAAFAAQLGRWRDESVPGTIFVIGGADGLLPELRRKAKLCLSFGAATWPHQMVRVMLLEQIYRAATILAGHPYHRA</sequence>
<reference key="1">
    <citation type="submission" date="2006-01" db="EMBL/GenBank/DDBJ databases">
        <title>Complete sequence of Rhodopseudomonas palustris HaA2.</title>
        <authorList>
            <consortium name="US DOE Joint Genome Institute"/>
            <person name="Copeland A."/>
            <person name="Lucas S."/>
            <person name="Lapidus A."/>
            <person name="Barry K."/>
            <person name="Detter J.C."/>
            <person name="Glavina T."/>
            <person name="Hammon N."/>
            <person name="Israni S."/>
            <person name="Pitluck S."/>
            <person name="Chain P."/>
            <person name="Malfatti S."/>
            <person name="Shin M."/>
            <person name="Vergez L."/>
            <person name="Schmutz J."/>
            <person name="Larimer F."/>
            <person name="Land M."/>
            <person name="Hauser L."/>
            <person name="Pelletier D.A."/>
            <person name="Kyrpides N."/>
            <person name="Anderson I."/>
            <person name="Oda Y."/>
            <person name="Harwood C.S."/>
            <person name="Richardson P."/>
        </authorList>
    </citation>
    <scope>NUCLEOTIDE SEQUENCE [LARGE SCALE GENOMIC DNA]</scope>
    <source>
        <strain>HaA2</strain>
    </source>
</reference>